<comment type="function">
    <text evidence="1">Molecular chaperone capable of stabilizing a range of proteins. Seems to fulfill an ATP-independent, HSP70-like function in archaeal de novo protein folding.</text>
</comment>
<comment type="subunit">
    <text evidence="1">Heterohexamer of two alpha and four beta subunits.</text>
</comment>
<comment type="subcellular location">
    <subcellularLocation>
        <location evidence="1">Cytoplasm</location>
    </subcellularLocation>
</comment>
<comment type="similarity">
    <text evidence="2">Belongs to the prefoldin subunit alpha family.</text>
</comment>
<protein>
    <recommendedName>
        <fullName evidence="1">Prefoldin subunit alpha</fullName>
    </recommendedName>
    <alternativeName>
        <fullName evidence="1">GimC subunit alpha</fullName>
    </alternativeName>
</protein>
<feature type="chain" id="PRO_0000153689" description="Prefoldin subunit alpha">
    <location>
        <begin position="1"/>
        <end position="151"/>
    </location>
</feature>
<proteinExistence type="inferred from homology"/>
<name>PFDA_SULTO</name>
<keyword id="KW-0143">Chaperone</keyword>
<keyword id="KW-0963">Cytoplasm</keyword>
<keyword id="KW-1185">Reference proteome</keyword>
<gene>
    <name evidence="1" type="primary">pfdA</name>
    <name type="ordered locus">STK_13710</name>
</gene>
<evidence type="ECO:0000255" key="1">
    <source>
        <dbReference type="HAMAP-Rule" id="MF_00308"/>
    </source>
</evidence>
<evidence type="ECO:0000305" key="2"/>
<accession>Q971I6</accession>
<accession>F9VP38</accession>
<dbReference type="EMBL" id="BA000023">
    <property type="protein sequence ID" value="BAK54546.1"/>
    <property type="molecule type" value="Genomic_DNA"/>
</dbReference>
<dbReference type="RefSeq" id="WP_052846955.1">
    <property type="nucleotide sequence ID" value="NC_003106.2"/>
</dbReference>
<dbReference type="SMR" id="Q971I6"/>
<dbReference type="STRING" id="273063.STK_13710"/>
<dbReference type="GeneID" id="1459396"/>
<dbReference type="KEGG" id="sto:STK_13710"/>
<dbReference type="PATRIC" id="fig|273063.9.peg.1567"/>
<dbReference type="eggNOG" id="arCOG01341">
    <property type="taxonomic scope" value="Archaea"/>
</dbReference>
<dbReference type="OrthoDB" id="19084at2157"/>
<dbReference type="Proteomes" id="UP000001015">
    <property type="component" value="Chromosome"/>
</dbReference>
<dbReference type="GO" id="GO:0005737">
    <property type="term" value="C:cytoplasm"/>
    <property type="evidence" value="ECO:0007669"/>
    <property type="project" value="UniProtKB-SubCell"/>
</dbReference>
<dbReference type="GO" id="GO:0016272">
    <property type="term" value="C:prefoldin complex"/>
    <property type="evidence" value="ECO:0007669"/>
    <property type="project" value="UniProtKB-UniRule"/>
</dbReference>
<dbReference type="GO" id="GO:0051082">
    <property type="term" value="F:unfolded protein binding"/>
    <property type="evidence" value="ECO:0007669"/>
    <property type="project" value="UniProtKB-UniRule"/>
</dbReference>
<dbReference type="GO" id="GO:0006457">
    <property type="term" value="P:protein folding"/>
    <property type="evidence" value="ECO:0007669"/>
    <property type="project" value="UniProtKB-UniRule"/>
</dbReference>
<dbReference type="CDD" id="cd00584">
    <property type="entry name" value="Prefoldin_alpha"/>
    <property type="match status" value="1"/>
</dbReference>
<dbReference type="Gene3D" id="1.10.287.370">
    <property type="match status" value="1"/>
</dbReference>
<dbReference type="HAMAP" id="MF_00308">
    <property type="entry name" value="PfdA"/>
    <property type="match status" value="1"/>
</dbReference>
<dbReference type="InterPro" id="IPR011599">
    <property type="entry name" value="PFD_alpha_archaea"/>
</dbReference>
<dbReference type="InterPro" id="IPR009053">
    <property type="entry name" value="Prefoldin"/>
</dbReference>
<dbReference type="InterPro" id="IPR004127">
    <property type="entry name" value="Prefoldin_subunit_alpha"/>
</dbReference>
<dbReference type="NCBIfam" id="TIGR00293">
    <property type="entry name" value="prefoldin subunit alpha"/>
    <property type="match status" value="1"/>
</dbReference>
<dbReference type="Pfam" id="PF02996">
    <property type="entry name" value="Prefoldin"/>
    <property type="match status" value="1"/>
</dbReference>
<dbReference type="SUPFAM" id="SSF46579">
    <property type="entry name" value="Prefoldin"/>
    <property type="match status" value="1"/>
</dbReference>
<organism>
    <name type="scientific">Sulfurisphaera tokodaii (strain DSM 16993 / JCM 10545 / NBRC 100140 / 7)</name>
    <name type="common">Sulfolobus tokodaii</name>
    <dbReference type="NCBI Taxonomy" id="273063"/>
    <lineage>
        <taxon>Archaea</taxon>
        <taxon>Thermoproteota</taxon>
        <taxon>Thermoprotei</taxon>
        <taxon>Sulfolobales</taxon>
        <taxon>Sulfolobaceae</taxon>
        <taxon>Sulfurisphaera</taxon>
    </lineage>
</organism>
<sequence length="151" mass="16959">MSNEENQQKVVVSLEDLLAQADALKKYIDYLQKTYAELQDNIMSIDSSLQALKELQNSQELLMVGDKRGNVIFKVQGIDKAKVLVHLGLEYYAEVDPDFATKVLNDKKSELSNVLSNVEKELAKSLEAYKEIADILNQAQQQLQAQQNKGG</sequence>
<reference key="1">
    <citation type="journal article" date="2001" name="DNA Res.">
        <title>Complete genome sequence of an aerobic thermoacidophilic Crenarchaeon, Sulfolobus tokodaii strain7.</title>
        <authorList>
            <person name="Kawarabayasi Y."/>
            <person name="Hino Y."/>
            <person name="Horikawa H."/>
            <person name="Jin-no K."/>
            <person name="Takahashi M."/>
            <person name="Sekine M."/>
            <person name="Baba S."/>
            <person name="Ankai A."/>
            <person name="Kosugi H."/>
            <person name="Hosoyama A."/>
            <person name="Fukui S."/>
            <person name="Nagai Y."/>
            <person name="Nishijima K."/>
            <person name="Otsuka R."/>
            <person name="Nakazawa H."/>
            <person name="Takamiya M."/>
            <person name="Kato Y."/>
            <person name="Yoshizawa T."/>
            <person name="Tanaka T."/>
            <person name="Kudoh Y."/>
            <person name="Yamazaki J."/>
            <person name="Kushida N."/>
            <person name="Oguchi A."/>
            <person name="Aoki K."/>
            <person name="Masuda S."/>
            <person name="Yanagii M."/>
            <person name="Nishimura M."/>
            <person name="Yamagishi A."/>
            <person name="Oshima T."/>
            <person name="Kikuchi H."/>
        </authorList>
    </citation>
    <scope>NUCLEOTIDE SEQUENCE [LARGE SCALE GENOMIC DNA]</scope>
    <source>
        <strain>DSM 16993 / JCM 10545 / NBRC 100140 / 7</strain>
    </source>
</reference>